<sequence length="429" mass="47186">MKGTVFAVALNHRSQLDAWQEAFSQPPYNAPPKTAVWFIKPRNTVIRHGEPILYPQGEKVLSGATVALIVGKTASRKRSEAAAEYIAGYALANEVSLPEESFYRPAIKAKCRDGFCPLGEMAPLSDVDNLTIITEINGREADHWNTADLQRSAAQLLSALSEFATLNPGDAILLGTPQNRVALRPGDRVRILAKGLPALENPVVAEDEFARNQTFTWPLSATGTLFALGLNYADHASELAFTPPKEPLVFIKAPNTFTEHHQTSVRPNNVEYMHYEAELVVVIGKTARKVSEAEAMEYVAGYTVCNDYAIRDYLENYYRPNLRVKSRDGLTPIGPWIVDKEAVSDPHNLTLRTFVNGELRQEGTTADLIFSIPFLISYLSEFMTLQPGDMIATGTPKGLSDVVPGDEVVLEIKGVGRLVNQIVCEESAN</sequence>
<organism>
    <name type="scientific">Salmonella dublin</name>
    <dbReference type="NCBI Taxonomy" id="98360"/>
    <lineage>
        <taxon>Bacteria</taxon>
        <taxon>Pseudomonadati</taxon>
        <taxon>Pseudomonadota</taxon>
        <taxon>Gammaproteobacteria</taxon>
        <taxon>Enterobacterales</taxon>
        <taxon>Enterobacteriaceae</taxon>
        <taxon>Salmonella</taxon>
    </lineage>
</organism>
<keyword id="KW-0058">Aromatic hydrocarbons catabolism</keyword>
<keyword id="KW-0413">Isomerase</keyword>
<keyword id="KW-0456">Lyase</keyword>
<keyword id="KW-0479">Metal-binding</keyword>
<keyword id="KW-0511">Multifunctional enzyme</keyword>
<keyword id="KW-0677">Repeat</keyword>
<name>HPAG_SALDU</name>
<feature type="chain" id="PRO_0000156834" description="4-hydroxyphenylacetate degradation bifunctional isomerase/decarboxylase">
    <location>
        <begin position="1"/>
        <end position="429"/>
    </location>
</feature>
<feature type="repeat" description="Approximate">
    <location>
        <begin position="1"/>
        <end position="215"/>
    </location>
</feature>
<feature type="repeat" description="Approximate">
    <location>
        <begin position="216"/>
        <end position="429"/>
    </location>
</feature>
<feature type="binding site" evidence="1">
    <location>
        <position position="276"/>
    </location>
    <ligand>
        <name>a divalent metal cation</name>
        <dbReference type="ChEBI" id="CHEBI:60240"/>
    </ligand>
</feature>
<feature type="binding site" evidence="1">
    <location>
        <position position="278"/>
    </location>
    <ligand>
        <name>a divalent metal cation</name>
        <dbReference type="ChEBI" id="CHEBI:60240"/>
    </ligand>
</feature>
<feature type="binding site" evidence="1">
    <location>
        <position position="307"/>
    </location>
    <ligand>
        <name>a divalent metal cation</name>
        <dbReference type="ChEBI" id="CHEBI:60240"/>
    </ligand>
</feature>
<dbReference type="EC" id="5.3.3.10" evidence="2"/>
<dbReference type="EC" id="4.1.1.68" evidence="2"/>
<dbReference type="EMBL" id="AF144422">
    <property type="protein sequence ID" value="AAD53501.1"/>
    <property type="molecule type" value="Genomic_DNA"/>
</dbReference>
<dbReference type="SMR" id="Q9RPU5"/>
<dbReference type="UniPathway" id="UPA00208">
    <property type="reaction ID" value="UER00419"/>
</dbReference>
<dbReference type="UniPathway" id="UPA00208">
    <property type="reaction ID" value="UER00420"/>
</dbReference>
<dbReference type="GO" id="GO:0008704">
    <property type="term" value="F:5-carboxymethyl-2-hydroxymuconate delta-isomerase activity"/>
    <property type="evidence" value="ECO:0007669"/>
    <property type="project" value="UniProtKB-EC"/>
</dbReference>
<dbReference type="GO" id="GO:0018800">
    <property type="term" value="F:5-oxopent-3-ene-1,2,5-tricarboxylate decarboxylase activity"/>
    <property type="evidence" value="ECO:0007669"/>
    <property type="project" value="UniProtKB-EC"/>
</dbReference>
<dbReference type="GO" id="GO:0046872">
    <property type="term" value="F:metal ion binding"/>
    <property type="evidence" value="ECO:0007669"/>
    <property type="project" value="UniProtKB-KW"/>
</dbReference>
<dbReference type="GO" id="GO:1901023">
    <property type="term" value="P:4-hydroxyphenylacetate catabolic process"/>
    <property type="evidence" value="ECO:0007669"/>
    <property type="project" value="InterPro"/>
</dbReference>
<dbReference type="FunFam" id="3.90.850.10:FF:000002">
    <property type="entry name" value="2-hydroxyhepta-2,4-diene-1,7-dioate isomerase"/>
    <property type="match status" value="1"/>
</dbReference>
<dbReference type="Gene3D" id="3.90.850.10">
    <property type="entry name" value="Fumarylacetoacetase-like, C-terminal domain"/>
    <property type="match status" value="2"/>
</dbReference>
<dbReference type="InterPro" id="IPR011234">
    <property type="entry name" value="Fumarylacetoacetase-like_C"/>
</dbReference>
<dbReference type="InterPro" id="IPR036663">
    <property type="entry name" value="Fumarylacetoacetase_C_sf"/>
</dbReference>
<dbReference type="InterPro" id="IPR012684">
    <property type="entry name" value="HPA_isomer/decarb_C"/>
</dbReference>
<dbReference type="InterPro" id="IPR012686">
    <property type="entry name" value="HPA_isomer/decarb_N"/>
</dbReference>
<dbReference type="NCBIfam" id="TIGR02303">
    <property type="entry name" value="HpaG-C-term"/>
    <property type="match status" value="1"/>
</dbReference>
<dbReference type="NCBIfam" id="TIGR02305">
    <property type="entry name" value="HpaG-N-term"/>
    <property type="match status" value="1"/>
</dbReference>
<dbReference type="NCBIfam" id="NF011750">
    <property type="entry name" value="PRK15203.1"/>
    <property type="match status" value="1"/>
</dbReference>
<dbReference type="PANTHER" id="PTHR11820:SF114">
    <property type="entry name" value="4-HYDROXYPHENYLACETATE CATABOLISM PROTEIN"/>
    <property type="match status" value="1"/>
</dbReference>
<dbReference type="PANTHER" id="PTHR11820">
    <property type="entry name" value="ACYLPYRUVASE"/>
    <property type="match status" value="1"/>
</dbReference>
<dbReference type="Pfam" id="PF01557">
    <property type="entry name" value="FAA_hydrolase"/>
    <property type="match status" value="2"/>
</dbReference>
<dbReference type="SUPFAM" id="SSF56529">
    <property type="entry name" value="FAH"/>
    <property type="match status" value="2"/>
</dbReference>
<protein>
    <recommendedName>
        <fullName>4-hydroxyphenylacetate degradation bifunctional isomerase/decarboxylase</fullName>
    </recommendedName>
    <domain>
        <recommendedName>
            <fullName>2-hydroxyhepta-2,4-diene-1,7-dioate isomerase</fullName>
            <shortName>HHDD isomerase</shortName>
            <ecNumber evidence="2">5.3.3.10</ecNumber>
        </recommendedName>
        <alternativeName>
            <fullName>5-carboxymethyl-2-hydroxymuconate Delta-isomerase</fullName>
        </alternativeName>
    </domain>
    <domain>
        <recommendedName>
            <fullName>5-carboxymethyl-2-oxo-hex-3-ene-1,7-dioate decarboxylase</fullName>
            <ecNumber evidence="2">4.1.1.68</ecNumber>
        </recommendedName>
        <alternativeName>
            <fullName>5-oxopent-3-ene-1,2,5-tricarboxylate decarboxylase</fullName>
            <shortName>OPET decarboxylase</shortName>
        </alternativeName>
    </domain>
</protein>
<proteinExistence type="inferred from homology"/>
<reference key="1">
    <citation type="submission" date="1999-04" db="EMBL/GenBank/DDBJ databases">
        <title>Characterization of the hpa genetic locus from Salmonella dublin.</title>
        <authorList>
            <person name="Galyov E.E."/>
            <person name="Wood M.W."/>
            <person name="Hedges S."/>
        </authorList>
    </citation>
    <scope>NUCLEOTIDE SEQUENCE [GENOMIC DNA]</scope>
    <source>
        <strain>2229</strain>
    </source>
</reference>
<comment type="function">
    <text evidence="2">Decarboxylates OPET (5-oxo-pent-3-ene-1,2,5-tricarboxylic acid) into HHDD (2-hydroxy-hept-2,4-diene-1,7-dioate) and isomerizes it to OHED (2-oxo-hept-3-ene-1,7-dioate).</text>
</comment>
<comment type="catalytic activity">
    <reaction evidence="2">
        <text>(2E,4Z)-5-hydroxypenta-2,4-diene-1,2,5-tricarboxylate = (3E,5R)-5-carboxy-2-oxohept-3-enedioate</text>
        <dbReference type="Rhea" id="RHEA:18813"/>
        <dbReference type="ChEBI" id="CHEBI:47961"/>
        <dbReference type="ChEBI" id="CHEBI:87491"/>
        <dbReference type="EC" id="5.3.3.10"/>
    </reaction>
</comment>
<comment type="catalytic activity">
    <reaction evidence="2">
        <text>(3E,5R)-5-carboxy-2-oxohept-3-enedioate + H(+) = (4Z)-2-oxohept-4-enedioate + CO2</text>
        <dbReference type="Rhea" id="RHEA:14397"/>
        <dbReference type="ChEBI" id="CHEBI:15378"/>
        <dbReference type="ChEBI" id="CHEBI:16526"/>
        <dbReference type="ChEBI" id="CHEBI:87491"/>
        <dbReference type="ChEBI" id="CHEBI:87507"/>
        <dbReference type="EC" id="4.1.1.68"/>
    </reaction>
</comment>
<comment type="cofactor">
    <cofactor evidence="2">
        <name>Mg(2+)</name>
        <dbReference type="ChEBI" id="CHEBI:18420"/>
    </cofactor>
</comment>
<comment type="pathway">
    <text>Aromatic compound metabolism; 4-hydroxyphenylacetate degradation; pyruvate and succinate semialdehyde from 4-hydroxyphenylacetate: step 4/7.</text>
</comment>
<comment type="pathway">
    <text>Aromatic compound metabolism; 4-hydroxyphenylacetate degradation; pyruvate and succinate semialdehyde from 4-hydroxyphenylacetate: step 5/7.</text>
</comment>
<comment type="subunit">
    <text evidence="2">Monomer.</text>
</comment>
<comment type="similarity">
    <text evidence="3">Belongs to the FAH family.</text>
</comment>
<accession>Q9RPU5</accession>
<gene>
    <name type="primary">hpaG</name>
</gene>
<evidence type="ECO:0000250" key="1"/>
<evidence type="ECO:0000250" key="2">
    <source>
        <dbReference type="UniProtKB" id="P37352"/>
    </source>
</evidence>
<evidence type="ECO:0000305" key="3"/>